<sequence>MGLPWYRVHTVVLNDPGRLIAVHLMHTALVSGWAGSMALYELAVFDPSDPVLDPMWRQGMFVIPFMTRLGVTQSWGGWSITGETVTNAGLWSYEGVAAVHIVLSGLLFLAAIWHWVYWDLELFRDERTGKPSLDLPKIFGIHLFLSGVLCFGFGAFHVTGLFGPGVWVSDPYGLTGRVQPVAPAWGAEGFDPFNPGGIASHHIAAGILGILAGLFHLSVRPPQRLYKGLRMGNVETVLSSSIAAVFFAAFVVAGTMWYGCAATPVELFGPTRYQWDQGYFQQEIDRRIRNSVAENVSLSEAWSKIPEKLAFYDYIGNNPAKGGLFRAGAMDNGDGIAVGWLGHAVFKDKEGNELFVRRMPTFFETFPVVLVDEEGIVRADVPFRRAESKYSIEQVGVSVEFYGGELNGVSFSDPATVKKYARRAQLGEIFEFDRATLKSDGVFRSSPRGWFTFGHACFALLFFFGHLWHGSRTLFRDVFAGIDPDLDSQVEFGLFQKLGDPTTRKQTV</sequence>
<accession>Q32RQ6</accession>
<protein>
    <recommendedName>
        <fullName evidence="1">Photosystem II CP47 reaction center protein</fullName>
    </recommendedName>
    <alternativeName>
        <fullName evidence="1">PSII 47 kDa protein</fullName>
    </alternativeName>
    <alternativeName>
        <fullName evidence="1">Protein CP-47</fullName>
    </alternativeName>
</protein>
<feature type="chain" id="PRO_0000359868" description="Photosystem II CP47 reaction center protein">
    <location>
        <begin position="1"/>
        <end position="508"/>
    </location>
</feature>
<feature type="transmembrane region" description="Helical" evidence="1">
    <location>
        <begin position="21"/>
        <end position="36"/>
    </location>
</feature>
<feature type="transmembrane region" description="Helical" evidence="1">
    <location>
        <begin position="101"/>
        <end position="115"/>
    </location>
</feature>
<feature type="transmembrane region" description="Helical" evidence="1">
    <location>
        <begin position="140"/>
        <end position="156"/>
    </location>
</feature>
<feature type="transmembrane region" description="Helical" evidence="1">
    <location>
        <begin position="203"/>
        <end position="218"/>
    </location>
</feature>
<feature type="transmembrane region" description="Helical" evidence="1">
    <location>
        <begin position="237"/>
        <end position="252"/>
    </location>
</feature>
<feature type="transmembrane region" description="Helical" evidence="1">
    <location>
        <begin position="457"/>
        <end position="472"/>
    </location>
</feature>
<evidence type="ECO:0000255" key="1">
    <source>
        <dbReference type="HAMAP-Rule" id="MF_01495"/>
    </source>
</evidence>
<gene>
    <name evidence="1" type="primary">psbB</name>
</gene>
<proteinExistence type="inferred from homology"/>
<geneLocation type="chloroplast"/>
<name>PSBB_ZYGCR</name>
<keyword id="KW-0148">Chlorophyll</keyword>
<keyword id="KW-0150">Chloroplast</keyword>
<keyword id="KW-0157">Chromophore</keyword>
<keyword id="KW-0472">Membrane</keyword>
<keyword id="KW-0602">Photosynthesis</keyword>
<keyword id="KW-0604">Photosystem II</keyword>
<keyword id="KW-0934">Plastid</keyword>
<keyword id="KW-0793">Thylakoid</keyword>
<keyword id="KW-0812">Transmembrane</keyword>
<keyword id="KW-1133">Transmembrane helix</keyword>
<comment type="function">
    <text evidence="1">One of the components of the core complex of photosystem II (PSII). It binds chlorophyll and helps catalyze the primary light-induced photochemical processes of PSII. PSII is a light-driven water:plastoquinone oxidoreductase, using light energy to abstract electrons from H(2)O, generating O(2) and a proton gradient subsequently used for ATP formation.</text>
</comment>
<comment type="cofactor">
    <text evidence="1">Binds multiple chlorophylls. PSII binds additional chlorophylls, carotenoids and specific lipids.</text>
</comment>
<comment type="subunit">
    <text evidence="1">PSII is composed of 1 copy each of membrane proteins PsbA, PsbB, PsbC, PsbD, PsbE, PsbF, PsbH, PsbI, PsbJ, PsbK, PsbL, PsbM, PsbT, PsbX, PsbY, PsbZ, Psb30/Ycf12, at least 3 peripheral proteins of the oxygen-evolving complex and a large number of cofactors. It forms dimeric complexes.</text>
</comment>
<comment type="subcellular location">
    <subcellularLocation>
        <location evidence="1">Plastid</location>
        <location evidence="1">Chloroplast thylakoid membrane</location>
        <topology evidence="1">Multi-pass membrane protein</topology>
    </subcellularLocation>
</comment>
<comment type="similarity">
    <text evidence="1">Belongs to the PsbB/PsbC family. PsbB subfamily.</text>
</comment>
<reference key="1">
    <citation type="journal article" date="2005" name="BMC Biol.">
        <title>The complete chloroplast DNA sequences of the charophycean green algae Staurastrum and Zygnema reveal that the chloroplast genome underwent extensive changes during the evolution of the Zygnematales.</title>
        <authorList>
            <person name="Turmel M."/>
            <person name="Otis C."/>
            <person name="Lemieux C."/>
        </authorList>
    </citation>
    <scope>NUCLEOTIDE SEQUENCE [LARGE SCALE GENOMIC DNA]</scope>
</reference>
<organism>
    <name type="scientific">Zygnema circumcarinatum</name>
    <name type="common">Green alga</name>
    <dbReference type="NCBI Taxonomy" id="35869"/>
    <lineage>
        <taxon>Eukaryota</taxon>
        <taxon>Viridiplantae</taxon>
        <taxon>Streptophyta</taxon>
        <taxon>Zygnematophyceae</taxon>
        <taxon>Zygnematophycidae</taxon>
        <taxon>Zygnematales</taxon>
        <taxon>Zygnemataceae</taxon>
        <taxon>Zygnema</taxon>
    </lineage>
</organism>
<dbReference type="EMBL" id="AY958086">
    <property type="protein sequence ID" value="AAX45837.1"/>
    <property type="molecule type" value="Genomic_DNA"/>
</dbReference>
<dbReference type="RefSeq" id="YP_636470.1">
    <property type="nucleotide sequence ID" value="NC_008117.1"/>
</dbReference>
<dbReference type="SMR" id="Q32RQ6"/>
<dbReference type="GeneID" id="4108157"/>
<dbReference type="GO" id="GO:0009535">
    <property type="term" value="C:chloroplast thylakoid membrane"/>
    <property type="evidence" value="ECO:0007669"/>
    <property type="project" value="UniProtKB-SubCell"/>
</dbReference>
<dbReference type="GO" id="GO:0009523">
    <property type="term" value="C:photosystem II"/>
    <property type="evidence" value="ECO:0007669"/>
    <property type="project" value="UniProtKB-KW"/>
</dbReference>
<dbReference type="GO" id="GO:0016168">
    <property type="term" value="F:chlorophyll binding"/>
    <property type="evidence" value="ECO:0007669"/>
    <property type="project" value="UniProtKB-UniRule"/>
</dbReference>
<dbReference type="GO" id="GO:0045156">
    <property type="term" value="F:electron transporter, transferring electrons within the cyclic electron transport pathway of photosynthesis activity"/>
    <property type="evidence" value="ECO:0007669"/>
    <property type="project" value="InterPro"/>
</dbReference>
<dbReference type="GO" id="GO:0009772">
    <property type="term" value="P:photosynthetic electron transport in photosystem II"/>
    <property type="evidence" value="ECO:0007669"/>
    <property type="project" value="InterPro"/>
</dbReference>
<dbReference type="FunFam" id="3.10.680.10:FF:000001">
    <property type="entry name" value="Photosystem II CP47 reaction center protein"/>
    <property type="match status" value="1"/>
</dbReference>
<dbReference type="Gene3D" id="3.10.680.10">
    <property type="entry name" value="Photosystem II CP47 reaction center protein"/>
    <property type="match status" value="1"/>
</dbReference>
<dbReference type="HAMAP" id="MF_01495">
    <property type="entry name" value="PSII_PsbB_CP47"/>
    <property type="match status" value="1"/>
</dbReference>
<dbReference type="InterPro" id="IPR000932">
    <property type="entry name" value="PS_antenna-like"/>
</dbReference>
<dbReference type="InterPro" id="IPR036001">
    <property type="entry name" value="PS_II_antenna-like_sf"/>
</dbReference>
<dbReference type="InterPro" id="IPR017486">
    <property type="entry name" value="PSII_PsbB"/>
</dbReference>
<dbReference type="NCBIfam" id="TIGR03039">
    <property type="entry name" value="PS_II_CP47"/>
    <property type="match status" value="1"/>
</dbReference>
<dbReference type="PANTHER" id="PTHR33180">
    <property type="entry name" value="PHOTOSYSTEM II CP43 REACTION CENTER PROTEIN"/>
    <property type="match status" value="1"/>
</dbReference>
<dbReference type="PANTHER" id="PTHR33180:SF37">
    <property type="entry name" value="PHOTOSYSTEM II CP43 REACTION CENTER PROTEIN"/>
    <property type="match status" value="1"/>
</dbReference>
<dbReference type="Pfam" id="PF00421">
    <property type="entry name" value="PSII"/>
    <property type="match status" value="1"/>
</dbReference>
<dbReference type="SUPFAM" id="SSF161077">
    <property type="entry name" value="Photosystem II antenna protein-like"/>
    <property type="match status" value="1"/>
</dbReference>